<dbReference type="EC" id="1.2.7.3"/>
<dbReference type="EMBL" id="AE000782">
    <property type="protein sequence ID" value="AAB90767.1"/>
    <property type="molecule type" value="Genomic_DNA"/>
</dbReference>
<dbReference type="PIR" id="G69308">
    <property type="entry name" value="G69308"/>
</dbReference>
<dbReference type="RefSeq" id="WP_010877978.1">
    <property type="nucleotide sequence ID" value="NC_000917.1"/>
</dbReference>
<dbReference type="SMR" id="O29779"/>
<dbReference type="STRING" id="224325.AF_0471"/>
<dbReference type="PaxDb" id="224325-AF_0471"/>
<dbReference type="EnsemblBacteria" id="AAB90767">
    <property type="protein sequence ID" value="AAB90767"/>
    <property type="gene ID" value="AF_0471"/>
</dbReference>
<dbReference type="KEGG" id="afu:AF_0471"/>
<dbReference type="eggNOG" id="arCOG01602">
    <property type="taxonomic scope" value="Archaea"/>
</dbReference>
<dbReference type="HOGENOM" id="CLU_087284_0_0_2"/>
<dbReference type="OrthoDB" id="18183at2157"/>
<dbReference type="PhylomeDB" id="O29779"/>
<dbReference type="Proteomes" id="UP000002199">
    <property type="component" value="Chromosome"/>
</dbReference>
<dbReference type="GO" id="GO:0047553">
    <property type="term" value="F:2-oxoglutarate synthase activity"/>
    <property type="evidence" value="ECO:0007669"/>
    <property type="project" value="UniProtKB-EC"/>
</dbReference>
<dbReference type="Gene3D" id="3.40.920.10">
    <property type="entry name" value="Pyruvate-ferredoxin oxidoreductase, PFOR, domain III"/>
    <property type="match status" value="1"/>
</dbReference>
<dbReference type="InterPro" id="IPR052554">
    <property type="entry name" value="2-oxoglutarate_synth_KorC"/>
</dbReference>
<dbReference type="InterPro" id="IPR019752">
    <property type="entry name" value="Pyrv/ketoisovalerate_OxRed_cat"/>
</dbReference>
<dbReference type="InterPro" id="IPR002869">
    <property type="entry name" value="Pyrv_flavodox_OxRed_cen"/>
</dbReference>
<dbReference type="PANTHER" id="PTHR42730">
    <property type="entry name" value="2-OXOGLUTARATE SYNTHASE SUBUNIT KORC"/>
    <property type="match status" value="1"/>
</dbReference>
<dbReference type="PANTHER" id="PTHR42730:SF1">
    <property type="entry name" value="2-OXOGLUTARATE SYNTHASE SUBUNIT KORC"/>
    <property type="match status" value="1"/>
</dbReference>
<dbReference type="Pfam" id="PF01558">
    <property type="entry name" value="POR"/>
    <property type="match status" value="1"/>
</dbReference>
<dbReference type="SUPFAM" id="SSF53323">
    <property type="entry name" value="Pyruvate-ferredoxin oxidoreductase, PFOR, domain III"/>
    <property type="match status" value="1"/>
</dbReference>
<comment type="catalytic activity">
    <reaction>
        <text>2 oxidized [2Fe-2S]-[ferredoxin] + 2-oxoglutarate + CoA = succinyl-CoA + 2 reduced [2Fe-2S]-[ferredoxin] + CO2 + H(+)</text>
        <dbReference type="Rhea" id="RHEA:17297"/>
        <dbReference type="Rhea" id="RHEA-COMP:10000"/>
        <dbReference type="Rhea" id="RHEA-COMP:10001"/>
        <dbReference type="ChEBI" id="CHEBI:15378"/>
        <dbReference type="ChEBI" id="CHEBI:16526"/>
        <dbReference type="ChEBI" id="CHEBI:16810"/>
        <dbReference type="ChEBI" id="CHEBI:33737"/>
        <dbReference type="ChEBI" id="CHEBI:33738"/>
        <dbReference type="ChEBI" id="CHEBI:57287"/>
        <dbReference type="ChEBI" id="CHEBI:57292"/>
        <dbReference type="EC" id="1.2.7.3"/>
    </reaction>
</comment>
<comment type="subunit">
    <text evidence="1">Heterotetramer of the KorA, KorB, KorC and KorD subunits.</text>
</comment>
<keyword id="KW-0560">Oxidoreductase</keyword>
<keyword id="KW-1185">Reference proteome</keyword>
<reference key="1">
    <citation type="journal article" date="1997" name="Nature">
        <title>The complete genome sequence of the hyperthermophilic, sulphate-reducing archaeon Archaeoglobus fulgidus.</title>
        <authorList>
            <person name="Klenk H.-P."/>
            <person name="Clayton R.A."/>
            <person name="Tomb J.-F."/>
            <person name="White O."/>
            <person name="Nelson K.E."/>
            <person name="Ketchum K.A."/>
            <person name="Dodson R.J."/>
            <person name="Gwinn M.L."/>
            <person name="Hickey E.K."/>
            <person name="Peterson J.D."/>
            <person name="Richardson D.L."/>
            <person name="Kerlavage A.R."/>
            <person name="Graham D.E."/>
            <person name="Kyrpides N.C."/>
            <person name="Fleischmann R.D."/>
            <person name="Quackenbush J."/>
            <person name="Lee N.H."/>
            <person name="Sutton G.G."/>
            <person name="Gill S.R."/>
            <person name="Kirkness E.F."/>
            <person name="Dougherty B.A."/>
            <person name="McKenney K."/>
            <person name="Adams M.D."/>
            <person name="Loftus B.J."/>
            <person name="Peterson S.N."/>
            <person name="Reich C.I."/>
            <person name="McNeil L.K."/>
            <person name="Badger J.H."/>
            <person name="Glodek A."/>
            <person name="Zhou L."/>
            <person name="Overbeek R."/>
            <person name="Gocayne J.D."/>
            <person name="Weidman J.F."/>
            <person name="McDonald L.A."/>
            <person name="Utterback T.R."/>
            <person name="Cotton M.D."/>
            <person name="Spriggs T."/>
            <person name="Artiach P."/>
            <person name="Kaine B.P."/>
            <person name="Sykes S.M."/>
            <person name="Sadow P.W."/>
            <person name="D'Andrea K.P."/>
            <person name="Bowman C."/>
            <person name="Fujii C."/>
            <person name="Garland S.A."/>
            <person name="Mason T.M."/>
            <person name="Olsen G.J."/>
            <person name="Fraser C.M."/>
            <person name="Smith H.O."/>
            <person name="Woese C.R."/>
            <person name="Venter J.C."/>
        </authorList>
    </citation>
    <scope>NUCLEOTIDE SEQUENCE [LARGE SCALE GENOMIC DNA]</scope>
    <source>
        <strain>ATCC 49558 / DSM 4304 / JCM 9628 / NBRC 100126 / VC-16</strain>
    </source>
</reference>
<gene>
    <name type="primary">korC</name>
    <name type="synonym">korG</name>
    <name type="ordered locus">AF_0471</name>
</gene>
<accession>O29779</accession>
<proteinExistence type="inferred from homology"/>
<name>KORC_ARCFU</name>
<evidence type="ECO:0000250" key="1"/>
<protein>
    <recommendedName>
        <fullName>2-oxoglutarate synthase subunit KorC</fullName>
        <ecNumber>1.2.7.3</ecNumber>
    </recommendedName>
    <alternativeName>
        <fullName>2-ketoglutarate oxidoreductase gamma chain</fullName>
        <shortName>KOR</shortName>
    </alternativeName>
    <alternativeName>
        <fullName>2-oxoglutarate-ferredoxin oxidoreductase subunit gamma</fullName>
    </alternativeName>
</protein>
<feature type="chain" id="PRO_0000099945" description="2-oxoglutarate synthase subunit KorC">
    <location>
        <begin position="1"/>
        <end position="187"/>
    </location>
</feature>
<sequence>MPREVNIRIAGTGGQGVIKAGLVLAEAFALEGKNVVQTQSYGPEARGGASRADIIVSDDEIDFPGLRRVDYLLVLHDSAYRKYYPQVDGETHVIYDSSLVNARRGLGFPFTETSIREFGTPLFANMIAIGALTAMLGLQPEKVEVVIQKRMRKAEENVKAFRIGFEMGRRVTKPKVVSHVVKPYILS</sequence>
<organism>
    <name type="scientific">Archaeoglobus fulgidus (strain ATCC 49558 / DSM 4304 / JCM 9628 / NBRC 100126 / VC-16)</name>
    <dbReference type="NCBI Taxonomy" id="224325"/>
    <lineage>
        <taxon>Archaea</taxon>
        <taxon>Methanobacteriati</taxon>
        <taxon>Methanobacteriota</taxon>
        <taxon>Archaeoglobi</taxon>
        <taxon>Archaeoglobales</taxon>
        <taxon>Archaeoglobaceae</taxon>
        <taxon>Archaeoglobus</taxon>
    </lineage>
</organism>